<gene>
    <name type="primary">outG</name>
</gene>
<organism>
    <name type="scientific">Dickeya chrysanthemi</name>
    <name type="common">Pectobacterium chrysanthemi</name>
    <name type="synonym">Erwinia chrysanthemi</name>
    <dbReference type="NCBI Taxonomy" id="556"/>
    <lineage>
        <taxon>Bacteria</taxon>
        <taxon>Pseudomonadati</taxon>
        <taxon>Pseudomonadota</taxon>
        <taxon>Gammaproteobacteria</taxon>
        <taxon>Enterobacterales</taxon>
        <taxon>Pectobacteriaceae</taxon>
        <taxon>Dickeya</taxon>
    </lineage>
</organism>
<accession>P31585</accession>
<feature type="propeptide" id="PRO_0000449507" description="Leader sequence" evidence="3">
    <location>
        <begin position="1"/>
        <end position="7"/>
    </location>
</feature>
<feature type="chain" id="PRO_0000024205" description="Type II secretion system core protein G">
    <location>
        <begin position="8"/>
        <end position="153"/>
    </location>
</feature>
<feature type="transmembrane region" description="Helical" evidence="2">
    <location>
        <begin position="8"/>
        <end position="28"/>
    </location>
</feature>
<feature type="region of interest" description="Disordered" evidence="4">
    <location>
        <begin position="68"/>
        <end position="91"/>
    </location>
</feature>
<feature type="region of interest" description="Disordered" evidence="4">
    <location>
        <begin position="126"/>
        <end position="153"/>
    </location>
</feature>
<feature type="compositionally biased region" description="Low complexity" evidence="4">
    <location>
        <begin position="134"/>
        <end position="143"/>
    </location>
</feature>
<feature type="compositionally biased region" description="Gly residues" evidence="4">
    <location>
        <begin position="144"/>
        <end position="153"/>
    </location>
</feature>
<feature type="modified residue" description="N-methylphenylalanine" evidence="3">
    <location>
        <position position="8"/>
    </location>
</feature>
<keyword id="KW-0997">Cell inner membrane</keyword>
<keyword id="KW-1003">Cell membrane</keyword>
<keyword id="KW-0472">Membrane</keyword>
<keyword id="KW-0488">Methylation</keyword>
<keyword id="KW-0653">Protein transport</keyword>
<keyword id="KW-0812">Transmembrane</keyword>
<keyword id="KW-1133">Transmembrane helix</keyword>
<keyword id="KW-0813">Transport</keyword>
<evidence type="ECO:0000250" key="1">
    <source>
        <dbReference type="UniProtKB" id="Q00514"/>
    </source>
</evidence>
<evidence type="ECO:0000255" key="2"/>
<evidence type="ECO:0000255" key="3">
    <source>
        <dbReference type="PROSITE-ProRule" id="PRU01070"/>
    </source>
</evidence>
<evidence type="ECO:0000256" key="4">
    <source>
        <dbReference type="SAM" id="MobiDB-lite"/>
    </source>
</evidence>
<evidence type="ECO:0000305" key="5"/>
<proteinExistence type="inferred from homology"/>
<protein>
    <recommendedName>
        <fullName>Type II secretion system core protein G</fullName>
        <shortName>T2SS core protein G</shortName>
    </recommendedName>
    <alternativeName>
        <fullName>General secretion pathway protein G</fullName>
    </alternativeName>
    <alternativeName>
        <fullName>Pectic enzymes secretion protein OutG</fullName>
    </alternativeName>
</protein>
<reference key="1">
    <citation type="journal article" date="1992" name="J. Bacteriol.">
        <title>Analysis of eight out genes in a cluster required for pectic enzyme secretion by Erwinia chrysanthemi: sequence comparison with secretion genes from other Gram-negative bacteria.</title>
        <authorList>
            <person name="Lindeberg M."/>
            <person name="Collmer A."/>
        </authorList>
    </citation>
    <scope>NUCLEOTIDE SEQUENCE [GENOMIC DNA]</scope>
    <source>
        <strain>EC16</strain>
    </source>
</reference>
<sequence length="153" mass="16789">MERRQRGFTLLEIMVVIVILGVLASLVVPNLMGNKEKADKQKAVSDIVALESQLDMYKLDNSRYPTTEQGLGALVKKPTTPPEPRNYPQDGYIRRLPQDPWGAEYQLVSPGRHGKIDVFSYGPDGMPDTDDDIGNWNVGNGAHNNGGNGNGNP</sequence>
<name>GSPG_DICCH</name>
<comment type="function">
    <text evidence="1">Core component of the type II secretion system required for the energy-dependent secretion of extracellular factors such as proteases and toxins from the periplasm. Pseudopilin (pilin-like) protein that polymerizes to form the pseudopilus. Further polymerization triggers pseudopilus growth.</text>
</comment>
<comment type="subunit">
    <text evidence="1">Type II secretion system is composed of four main components: the outer membrane complex, the inner membrane complex, the cytoplasmic secretion ATPase and the periplasm-spanning pseudopilus. Forms homomultimers.</text>
</comment>
<comment type="subcellular location">
    <subcellularLocation>
        <location evidence="1">Cell inner membrane</location>
        <topology evidence="2">Single-pass membrane protein</topology>
    </subcellularLocation>
</comment>
<comment type="PTM">
    <text evidence="1">Cleaved by the prepilin peptidase.</text>
</comment>
<comment type="PTM">
    <text evidence="1">Methylated by prepilin peptidase at the amino group of the N-terminal phenylalanine once the leader sequence is cleaved.</text>
</comment>
<comment type="similarity">
    <text evidence="5">Belongs to the GSP G family.</text>
</comment>
<dbReference type="EMBL" id="L02214">
    <property type="protein sequence ID" value="AAA24834.1"/>
    <property type="molecule type" value="Genomic_DNA"/>
</dbReference>
<dbReference type="PIR" id="E47021">
    <property type="entry name" value="E47021"/>
</dbReference>
<dbReference type="SMR" id="P31585"/>
<dbReference type="GO" id="GO:0005886">
    <property type="term" value="C:plasma membrane"/>
    <property type="evidence" value="ECO:0007669"/>
    <property type="project" value="UniProtKB-SubCell"/>
</dbReference>
<dbReference type="GO" id="GO:0015627">
    <property type="term" value="C:type II protein secretion system complex"/>
    <property type="evidence" value="ECO:0007669"/>
    <property type="project" value="InterPro"/>
</dbReference>
<dbReference type="GO" id="GO:0015628">
    <property type="term" value="P:protein secretion by the type II secretion system"/>
    <property type="evidence" value="ECO:0007669"/>
    <property type="project" value="InterPro"/>
</dbReference>
<dbReference type="Gene3D" id="3.30.700.10">
    <property type="entry name" value="Glycoprotein, Type 4 Pilin"/>
    <property type="match status" value="1"/>
</dbReference>
<dbReference type="InterPro" id="IPR000983">
    <property type="entry name" value="Bac_GSPG_pilin"/>
</dbReference>
<dbReference type="InterPro" id="IPR012902">
    <property type="entry name" value="N_methyl_site"/>
</dbReference>
<dbReference type="InterPro" id="IPR045584">
    <property type="entry name" value="Pilin-like"/>
</dbReference>
<dbReference type="InterPro" id="IPR013545">
    <property type="entry name" value="T2SS_protein-GspG_C"/>
</dbReference>
<dbReference type="InterPro" id="IPR050470">
    <property type="entry name" value="T4P/T2SS_Core"/>
</dbReference>
<dbReference type="InterPro" id="IPR010054">
    <property type="entry name" value="Type2_sec_GspG"/>
</dbReference>
<dbReference type="NCBIfam" id="TIGR02532">
    <property type="entry name" value="IV_pilin_GFxxxE"/>
    <property type="match status" value="1"/>
</dbReference>
<dbReference type="NCBIfam" id="TIGR01710">
    <property type="entry name" value="typeII_sec_gspG"/>
    <property type="match status" value="1"/>
</dbReference>
<dbReference type="PANTHER" id="PTHR30093">
    <property type="entry name" value="GENERAL SECRETION PATHWAY PROTEIN G"/>
    <property type="match status" value="1"/>
</dbReference>
<dbReference type="PANTHER" id="PTHR30093:SF44">
    <property type="entry name" value="TYPE II SECRETION SYSTEM CORE PROTEIN G"/>
    <property type="match status" value="1"/>
</dbReference>
<dbReference type="Pfam" id="PF07963">
    <property type="entry name" value="N_methyl"/>
    <property type="match status" value="1"/>
</dbReference>
<dbReference type="Pfam" id="PF08334">
    <property type="entry name" value="T2SSG"/>
    <property type="match status" value="1"/>
</dbReference>
<dbReference type="PRINTS" id="PR00813">
    <property type="entry name" value="BCTERIALGSPG"/>
</dbReference>
<dbReference type="SUPFAM" id="SSF54523">
    <property type="entry name" value="Pili subunits"/>
    <property type="match status" value="1"/>
</dbReference>
<dbReference type="PROSITE" id="PS00409">
    <property type="entry name" value="PROKAR_NTER_METHYL"/>
    <property type="match status" value="1"/>
</dbReference>